<reference key="1">
    <citation type="journal article" date="2000" name="Mol. Gen. Genet.">
        <title>Acquisition of a potential marker for insect transformation: isolation of a novel alcohol dehydrogenase gene from Bactrocera oleae by functional complementation in yeast.</title>
        <authorList>
            <person name="Benos P."/>
            <person name="Tavernarakis N."/>
            <person name="Brogna S."/>
            <person name="Thireos G."/>
            <person name="Savakis C."/>
        </authorList>
    </citation>
    <scope>NUCLEOTIDE SEQUENCE [GENOMIC DNA]</scope>
    <source>
        <strain>Benakeion</strain>
    </source>
</reference>
<proteinExistence type="inferred from homology"/>
<organism>
    <name type="scientific">Ceratitis capitata</name>
    <name type="common">Mediterranean fruit fly</name>
    <name type="synonym">Tephritis capitata</name>
    <dbReference type="NCBI Taxonomy" id="7213"/>
    <lineage>
        <taxon>Eukaryota</taxon>
        <taxon>Metazoa</taxon>
        <taxon>Ecdysozoa</taxon>
        <taxon>Arthropoda</taxon>
        <taxon>Hexapoda</taxon>
        <taxon>Insecta</taxon>
        <taxon>Pterygota</taxon>
        <taxon>Neoptera</taxon>
        <taxon>Endopterygota</taxon>
        <taxon>Diptera</taxon>
        <taxon>Brachycera</taxon>
        <taxon>Muscomorpha</taxon>
        <taxon>Tephritoidea</taxon>
        <taxon>Tephritidae</taxon>
        <taxon>Ceratitis</taxon>
        <taxon>Ceratitis</taxon>
    </lineage>
</organism>
<accession>P48814</accession>
<name>ADH1_CERCA</name>
<sequence>MSLAGKNVVFVGGLGFIAYEACKYLMNNDLASLFVFDVLDKPEAIKALQEINPKTKVYYTKFDITNKESIKQSLADVISKVQHIDALINGAGILTDPNVELTMNINLIGLINTTLEALPLMDKNKHGRGGVIVNIASVLGLEPCPPAAVYCASKFGVVGFSRSLGDPFYYEHTGVAVVTFCPGLTDTPLKNNIGSKYTFDYSKEIGEKLNSSKTQKPEVCGAHLAQAIELMDNGAIYISNQGTLTKVKPSVYWEPTY</sequence>
<protein>
    <recommendedName>
        <fullName>Alcohol dehydrogenase 1</fullName>
        <ecNumber>1.1.1.1</ecNumber>
    </recommendedName>
</protein>
<dbReference type="EC" id="1.1.1.1"/>
<dbReference type="EMBL" id="Z30194">
    <property type="protein sequence ID" value="CAA82926.1"/>
    <property type="molecule type" value="Genomic_DNA"/>
</dbReference>
<dbReference type="SMR" id="P48814"/>
<dbReference type="EnsemblMetazoa" id="XM_004536022.4">
    <property type="protein sequence ID" value="XP_004536079.1"/>
    <property type="gene ID" value="LOC101454300"/>
</dbReference>
<dbReference type="GeneID" id="101454300"/>
<dbReference type="KEGG" id="ccat:101454300"/>
<dbReference type="OrthoDB" id="417891at2759"/>
<dbReference type="GO" id="GO:0005737">
    <property type="term" value="C:cytoplasm"/>
    <property type="evidence" value="ECO:0007669"/>
    <property type="project" value="TreeGrafter"/>
</dbReference>
<dbReference type="GO" id="GO:0004022">
    <property type="term" value="F:alcohol dehydrogenase (NAD+) activity"/>
    <property type="evidence" value="ECO:0000314"/>
    <property type="project" value="UniProtKB"/>
</dbReference>
<dbReference type="CDD" id="cd05323">
    <property type="entry name" value="ADH_SDR_c_like"/>
    <property type="match status" value="1"/>
</dbReference>
<dbReference type="FunFam" id="3.40.50.720:FF:000149">
    <property type="entry name" value="15-hydroxyprostaglandin dehydrogenase [NAD(+)]"/>
    <property type="match status" value="1"/>
</dbReference>
<dbReference type="Gene3D" id="3.40.50.720">
    <property type="entry name" value="NAD(P)-binding Rossmann-like Domain"/>
    <property type="match status" value="1"/>
</dbReference>
<dbReference type="InterPro" id="IPR002426">
    <property type="entry name" value="ADH_Ceratitis-type"/>
</dbReference>
<dbReference type="InterPro" id="IPR036291">
    <property type="entry name" value="NAD(P)-bd_dom_sf"/>
</dbReference>
<dbReference type="InterPro" id="IPR020904">
    <property type="entry name" value="Sc_DH/Rdtase_CS"/>
</dbReference>
<dbReference type="InterPro" id="IPR002347">
    <property type="entry name" value="SDR_fam"/>
</dbReference>
<dbReference type="PANTHER" id="PTHR44229">
    <property type="entry name" value="15-HYDROXYPROSTAGLANDIN DEHYDROGENASE [NAD(+)]"/>
    <property type="match status" value="1"/>
</dbReference>
<dbReference type="PANTHER" id="PTHR44229:SF8">
    <property type="entry name" value="ALCOHOL DEHYDROGENASE-RELATED"/>
    <property type="match status" value="1"/>
</dbReference>
<dbReference type="Pfam" id="PF00106">
    <property type="entry name" value="adh_short"/>
    <property type="match status" value="1"/>
</dbReference>
<dbReference type="PRINTS" id="PR01169">
    <property type="entry name" value="CERATITISADH"/>
</dbReference>
<dbReference type="PRINTS" id="PR01167">
    <property type="entry name" value="INSADHFAMILY"/>
</dbReference>
<dbReference type="PRINTS" id="PR00080">
    <property type="entry name" value="SDRFAMILY"/>
</dbReference>
<dbReference type="SUPFAM" id="SSF51735">
    <property type="entry name" value="NAD(P)-binding Rossmann-fold domains"/>
    <property type="match status" value="1"/>
</dbReference>
<dbReference type="PROSITE" id="PS00061">
    <property type="entry name" value="ADH_SHORT"/>
    <property type="match status" value="1"/>
</dbReference>
<evidence type="ECO:0000250" key="1"/>
<evidence type="ECO:0000255" key="2">
    <source>
        <dbReference type="PROSITE-ProRule" id="PRU10001"/>
    </source>
</evidence>
<evidence type="ECO:0000305" key="3"/>
<gene>
    <name type="primary">ADH1</name>
</gene>
<keyword id="KW-0520">NAD</keyword>
<keyword id="KW-0560">Oxidoreductase</keyword>
<feature type="chain" id="PRO_0000054448" description="Alcohol dehydrogenase 1">
    <location>
        <begin position="1"/>
        <end position="257"/>
    </location>
</feature>
<feature type="active site" description="Proton acceptor" evidence="2">
    <location>
        <position position="150"/>
    </location>
</feature>
<feature type="binding site" evidence="1">
    <location>
        <begin position="9"/>
        <end position="33"/>
    </location>
    <ligand>
        <name>NAD(+)</name>
        <dbReference type="ChEBI" id="CHEBI:57540"/>
    </ligand>
</feature>
<feature type="binding site" evidence="1">
    <location>
        <position position="137"/>
    </location>
    <ligand>
        <name>substrate</name>
    </ligand>
</feature>
<comment type="catalytic activity">
    <reaction evidence="2">
        <text>a primary alcohol + NAD(+) = an aldehyde + NADH + H(+)</text>
        <dbReference type="Rhea" id="RHEA:10736"/>
        <dbReference type="ChEBI" id="CHEBI:15378"/>
        <dbReference type="ChEBI" id="CHEBI:15734"/>
        <dbReference type="ChEBI" id="CHEBI:17478"/>
        <dbReference type="ChEBI" id="CHEBI:57540"/>
        <dbReference type="ChEBI" id="CHEBI:57945"/>
        <dbReference type="EC" id="1.1.1.1"/>
    </reaction>
</comment>
<comment type="catalytic activity">
    <reaction evidence="2">
        <text>a secondary alcohol + NAD(+) = a ketone + NADH + H(+)</text>
        <dbReference type="Rhea" id="RHEA:10740"/>
        <dbReference type="ChEBI" id="CHEBI:15378"/>
        <dbReference type="ChEBI" id="CHEBI:17087"/>
        <dbReference type="ChEBI" id="CHEBI:35681"/>
        <dbReference type="ChEBI" id="CHEBI:57540"/>
        <dbReference type="ChEBI" id="CHEBI:57945"/>
        <dbReference type="EC" id="1.1.1.1"/>
    </reaction>
</comment>
<comment type="subunit">
    <text>Homodimer.</text>
</comment>
<comment type="similarity">
    <text evidence="3">Belongs to the short-chain dehydrogenases/reductases (SDR) family.</text>
</comment>